<comment type="function">
    <text evidence="1 2 5 7 8 10">Component of E3 ubiquitin ligase complex consisting of FBXO45, MYCBP2 and SKP1 (PubMed:29997255). Functions in substrate recognition but also plays an important role in assembly of the complex (PubMed:29997255). Required for normal neuromuscular synaptogenesis, axon pathfinding and neuronal migration (By similarity). Regulates neuron migration during brain development through interaction with N-cadherin/CDH2 after secretion via a non-classical mechanism (By similarity). Plays a role in the regulation of neurotransmission at mature neurons (By similarity). May control synaptic activity by controlling UNC13A via ubiquitin dependent pathway (By similarity). Specifically recognizes TP73, promoting its ubiquitination and degradation. Polyubiquitinates NMNAT2, an adenylyltransferase that acts as an axon maintenance factor, and regulates its stability and degradation by the proteasome (PubMed:29997255). Also acts by ubiquitinating FBXW7 during prolonged mitotic arrest and promotes FBXW7 proteasomal degradation (PubMed:31285543). Induces subsequently an increase in mitotic slippage and prevents mitotic cell death (PubMed:31285543). In response to influenza infection, mediates interferon-lambda receptor IFNLR1 polyubiquitination and degradation through the ubiquitin-proteasome system by docking with its intracellular receptor domain (PubMed:36379255).</text>
</comment>
<comment type="pathway">
    <text>Protein modification; protein ubiquitination.</text>
</comment>
<comment type="subunit">
    <text evidence="5 9">Forms a complex with MYCBP2 and SKP1 (PubMed:29997255). Interacts with HEY1; leading to FBXO45 nuclear translocation. Interacts (via SPRY domain) with CDH2 (PubMed:32341084).</text>
</comment>
<comment type="subcellular location">
    <subcellularLocation>
        <location evidence="9">Secreted</location>
    </subcellularLocation>
    <subcellularLocation>
        <location evidence="1">Postsynaptic cell membrane</location>
    </subcellularLocation>
    <subcellularLocation>
        <location evidence="1">Presynaptic cell membrane</location>
    </subcellularLocation>
    <subcellularLocation>
        <location evidence="6">Nucleus</location>
    </subcellularLocation>
    <text evidence="9">Secreted by a non-classical mechanism.</text>
</comment>
<comment type="induction">
    <text evidence="5 10">Down-regulated in response to DNA-damage (PubMed:19581926). Induced upon influenza infection (PubMed:36379255).</text>
</comment>
<comment type="similarity">
    <text evidence="11">Belongs to the FBXO45/Fsn family.</text>
</comment>
<organism>
    <name type="scientific">Homo sapiens</name>
    <name type="common">Human</name>
    <dbReference type="NCBI Taxonomy" id="9606"/>
    <lineage>
        <taxon>Eukaryota</taxon>
        <taxon>Metazoa</taxon>
        <taxon>Chordata</taxon>
        <taxon>Craniata</taxon>
        <taxon>Vertebrata</taxon>
        <taxon>Euteleostomi</taxon>
        <taxon>Mammalia</taxon>
        <taxon>Eutheria</taxon>
        <taxon>Euarchontoglires</taxon>
        <taxon>Primates</taxon>
        <taxon>Haplorrhini</taxon>
        <taxon>Catarrhini</taxon>
        <taxon>Hominidae</taxon>
        <taxon>Homo</taxon>
    </lineage>
</organism>
<keyword id="KW-0007">Acetylation</keyword>
<keyword id="KW-1003">Cell membrane</keyword>
<keyword id="KW-0966">Cell projection</keyword>
<keyword id="KW-0217">Developmental protein</keyword>
<keyword id="KW-0472">Membrane</keyword>
<keyword id="KW-0524">Neurogenesis</keyword>
<keyword id="KW-0539">Nucleus</keyword>
<keyword id="KW-0628">Postsynaptic cell membrane</keyword>
<keyword id="KW-1267">Proteomics identification</keyword>
<keyword id="KW-1185">Reference proteome</keyword>
<keyword id="KW-0964">Secreted</keyword>
<keyword id="KW-0770">Synapse</keyword>
<keyword id="KW-0833">Ubl conjugation pathway</keyword>
<gene>
    <name type="primary">FBXO45</name>
    <name type="synonym">FBX45</name>
</gene>
<dbReference type="EMBL" id="AC092933">
    <property type="status" value="NOT_ANNOTATED_CDS"/>
    <property type="molecule type" value="Genomic_DNA"/>
</dbReference>
<dbReference type="EMBL" id="CH471191">
    <property type="protein sequence ID" value="EAW53643.1"/>
    <property type="molecule type" value="Genomic_DNA"/>
</dbReference>
<dbReference type="EMBL" id="CH471191">
    <property type="protein sequence ID" value="EAW53644.1"/>
    <property type="molecule type" value="Genomic_DNA"/>
</dbReference>
<dbReference type="EMBL" id="AK025697">
    <property type="status" value="NOT_ANNOTATED_CDS"/>
    <property type="molecule type" value="mRNA"/>
</dbReference>
<dbReference type="CCDS" id="CCDS46985.1"/>
<dbReference type="RefSeq" id="NP_001099043.1">
    <property type="nucleotide sequence ID" value="NM_001105573.2"/>
</dbReference>
<dbReference type="SMR" id="P0C2W1"/>
<dbReference type="BioGRID" id="128358">
    <property type="interactions" value="194"/>
</dbReference>
<dbReference type="ComplexPortal" id="CPX-8004">
    <property type="entry name" value="Non-canonical FBXO45-MYCBP2-SKP1 E3 ubiquitin ligase complex"/>
</dbReference>
<dbReference type="FunCoup" id="P0C2W1">
    <property type="interactions" value="947"/>
</dbReference>
<dbReference type="IntAct" id="P0C2W1">
    <property type="interactions" value="61"/>
</dbReference>
<dbReference type="STRING" id="9606.ENSP00000310332"/>
<dbReference type="GlyGen" id="P0C2W1">
    <property type="glycosylation" value="1 site, 1 O-linked glycan (1 site)"/>
</dbReference>
<dbReference type="iPTMnet" id="P0C2W1"/>
<dbReference type="PhosphoSitePlus" id="P0C2W1"/>
<dbReference type="BioMuta" id="FBXO45"/>
<dbReference type="DMDM" id="146286173"/>
<dbReference type="jPOST" id="P0C2W1"/>
<dbReference type="MassIVE" id="P0C2W1"/>
<dbReference type="PaxDb" id="9606-ENSP00000310332"/>
<dbReference type="PeptideAtlas" id="P0C2W1"/>
<dbReference type="ProteomicsDB" id="52305"/>
<dbReference type="Pumba" id="P0C2W1"/>
<dbReference type="Antibodypedia" id="51201">
    <property type="antibodies" value="61 antibodies from 15 providers"/>
</dbReference>
<dbReference type="DNASU" id="200933"/>
<dbReference type="Ensembl" id="ENST00000311630.7">
    <property type="protein sequence ID" value="ENSP00000310332.6"/>
    <property type="gene ID" value="ENSG00000174013.8"/>
</dbReference>
<dbReference type="GeneID" id="200933"/>
<dbReference type="KEGG" id="hsa:200933"/>
<dbReference type="MANE-Select" id="ENST00000311630.7">
    <property type="protein sequence ID" value="ENSP00000310332.6"/>
    <property type="RefSeq nucleotide sequence ID" value="NM_001105573.2"/>
    <property type="RefSeq protein sequence ID" value="NP_001099043.1"/>
</dbReference>
<dbReference type="UCSC" id="uc010iai.4">
    <property type="organism name" value="human"/>
</dbReference>
<dbReference type="AGR" id="HGNC:29148"/>
<dbReference type="CTD" id="200933"/>
<dbReference type="DisGeNET" id="200933"/>
<dbReference type="GeneCards" id="FBXO45"/>
<dbReference type="HGNC" id="HGNC:29148">
    <property type="gene designation" value="FBXO45"/>
</dbReference>
<dbReference type="HPA" id="ENSG00000174013">
    <property type="expression patterns" value="Low tissue specificity"/>
</dbReference>
<dbReference type="MIM" id="609112">
    <property type="type" value="gene"/>
</dbReference>
<dbReference type="neXtProt" id="NX_P0C2W1"/>
<dbReference type="OpenTargets" id="ENSG00000174013"/>
<dbReference type="PharmGKB" id="PA134904114"/>
<dbReference type="VEuPathDB" id="HostDB:ENSG00000174013"/>
<dbReference type="eggNOG" id="KOG3953">
    <property type="taxonomic scope" value="Eukaryota"/>
</dbReference>
<dbReference type="GeneTree" id="ENSGT01030000234629"/>
<dbReference type="HOGENOM" id="CLU_046756_1_0_1"/>
<dbReference type="InParanoid" id="P0C2W1"/>
<dbReference type="OMA" id="ATKRASM"/>
<dbReference type="OrthoDB" id="2398163at2759"/>
<dbReference type="PAN-GO" id="P0C2W1">
    <property type="GO annotations" value="4 GO annotations based on evolutionary models"/>
</dbReference>
<dbReference type="PhylomeDB" id="P0C2W1"/>
<dbReference type="TreeFam" id="TF312822"/>
<dbReference type="PathwayCommons" id="P0C2W1"/>
<dbReference type="SignaLink" id="P0C2W1"/>
<dbReference type="SIGNOR" id="P0C2W1"/>
<dbReference type="UniPathway" id="UPA00143"/>
<dbReference type="BioGRID-ORCS" id="200933">
    <property type="hits" value="9 hits in 1187 CRISPR screens"/>
</dbReference>
<dbReference type="ChiTaRS" id="FBXO45">
    <property type="organism name" value="human"/>
</dbReference>
<dbReference type="GenomeRNAi" id="200933"/>
<dbReference type="Pharos" id="P0C2W1">
    <property type="development level" value="Tbio"/>
</dbReference>
<dbReference type="PRO" id="PR:P0C2W1"/>
<dbReference type="Proteomes" id="UP000005640">
    <property type="component" value="Chromosome 3"/>
</dbReference>
<dbReference type="RNAct" id="P0C2W1">
    <property type="molecule type" value="protein"/>
</dbReference>
<dbReference type="Bgee" id="ENSG00000174013">
    <property type="expression patterns" value="Expressed in secondary oocyte and 194 other cell types or tissues"/>
</dbReference>
<dbReference type="ExpressionAtlas" id="P0C2W1">
    <property type="expression patterns" value="baseline and differential"/>
</dbReference>
<dbReference type="GO" id="GO:0042995">
    <property type="term" value="C:cell projection"/>
    <property type="evidence" value="ECO:0007669"/>
    <property type="project" value="UniProtKB-KW"/>
</dbReference>
<dbReference type="GO" id="GO:0005737">
    <property type="term" value="C:cytoplasm"/>
    <property type="evidence" value="ECO:0000305"/>
    <property type="project" value="UniProt"/>
</dbReference>
<dbReference type="GO" id="GO:0005829">
    <property type="term" value="C:cytosol"/>
    <property type="evidence" value="ECO:0000314"/>
    <property type="project" value="HPA"/>
</dbReference>
<dbReference type="GO" id="GO:0005576">
    <property type="term" value="C:extracellular region"/>
    <property type="evidence" value="ECO:0007669"/>
    <property type="project" value="UniProtKB-SubCell"/>
</dbReference>
<dbReference type="GO" id="GO:0098978">
    <property type="term" value="C:glutamatergic synapse"/>
    <property type="evidence" value="ECO:0007669"/>
    <property type="project" value="Ensembl"/>
</dbReference>
<dbReference type="GO" id="GO:0043231">
    <property type="term" value="C:intracellular membrane-bounded organelle"/>
    <property type="evidence" value="ECO:0000314"/>
    <property type="project" value="HPA"/>
</dbReference>
<dbReference type="GO" id="GO:0005654">
    <property type="term" value="C:nucleoplasm"/>
    <property type="evidence" value="ECO:0000314"/>
    <property type="project" value="HPA"/>
</dbReference>
<dbReference type="GO" id="GO:0005886">
    <property type="term" value="C:plasma membrane"/>
    <property type="evidence" value="ECO:0000314"/>
    <property type="project" value="HPA"/>
</dbReference>
<dbReference type="GO" id="GO:0099524">
    <property type="term" value="C:postsynaptic cytosol"/>
    <property type="evidence" value="ECO:0007669"/>
    <property type="project" value="Ensembl"/>
</dbReference>
<dbReference type="GO" id="GO:0014069">
    <property type="term" value="C:postsynaptic density"/>
    <property type="evidence" value="ECO:0007669"/>
    <property type="project" value="Ensembl"/>
</dbReference>
<dbReference type="GO" id="GO:0045211">
    <property type="term" value="C:postsynaptic membrane"/>
    <property type="evidence" value="ECO:0007669"/>
    <property type="project" value="UniProtKB-SubCell"/>
</dbReference>
<dbReference type="GO" id="GO:0099523">
    <property type="term" value="C:presynaptic cytosol"/>
    <property type="evidence" value="ECO:0007669"/>
    <property type="project" value="Ensembl"/>
</dbReference>
<dbReference type="GO" id="GO:0042734">
    <property type="term" value="C:presynaptic membrane"/>
    <property type="evidence" value="ECO:0007669"/>
    <property type="project" value="UniProtKB-SubCell"/>
</dbReference>
<dbReference type="GO" id="GO:0019005">
    <property type="term" value="C:SCF ubiquitin ligase complex"/>
    <property type="evidence" value="ECO:0000318"/>
    <property type="project" value="GO_Central"/>
</dbReference>
<dbReference type="GO" id="GO:0045202">
    <property type="term" value="C:synapse"/>
    <property type="evidence" value="ECO:0000318"/>
    <property type="project" value="GO_Central"/>
</dbReference>
<dbReference type="GO" id="GO:1990756">
    <property type="term" value="F:ubiquitin-like ligase-substrate adaptor activity"/>
    <property type="evidence" value="ECO:0000314"/>
    <property type="project" value="UniProt"/>
</dbReference>
<dbReference type="GO" id="GO:0021960">
    <property type="term" value="P:anterior commissure morphogenesis"/>
    <property type="evidence" value="ECO:0007669"/>
    <property type="project" value="Ensembl"/>
</dbReference>
<dbReference type="GO" id="GO:0021799">
    <property type="term" value="P:cerebral cortex radially oriented cell migration"/>
    <property type="evidence" value="ECO:0007669"/>
    <property type="project" value="Ensembl"/>
</dbReference>
<dbReference type="GO" id="GO:0021800">
    <property type="term" value="P:cerebral cortex tangential migration"/>
    <property type="evidence" value="ECO:0007669"/>
    <property type="project" value="Ensembl"/>
</dbReference>
<dbReference type="GO" id="GO:0021957">
    <property type="term" value="P:corticospinal tract morphogenesis"/>
    <property type="evidence" value="ECO:0007669"/>
    <property type="project" value="Ensembl"/>
</dbReference>
<dbReference type="GO" id="GO:0006974">
    <property type="term" value="P:DNA damage response"/>
    <property type="evidence" value="ECO:0000314"/>
    <property type="project" value="UniProtKB"/>
</dbReference>
<dbReference type="GO" id="GO:0001764">
    <property type="term" value="P:neuron migration"/>
    <property type="evidence" value="ECO:0007669"/>
    <property type="project" value="Ensembl"/>
</dbReference>
<dbReference type="GO" id="GO:0043161">
    <property type="term" value="P:proteasome-mediated ubiquitin-dependent protein catabolic process"/>
    <property type="evidence" value="ECO:0000250"/>
    <property type="project" value="UniProtKB"/>
</dbReference>
<dbReference type="GO" id="GO:0070936">
    <property type="term" value="P:protein K48-linked ubiquitination"/>
    <property type="evidence" value="ECO:0000314"/>
    <property type="project" value="UniProt"/>
</dbReference>
<dbReference type="GO" id="GO:0016567">
    <property type="term" value="P:protein ubiquitination"/>
    <property type="evidence" value="ECO:0000314"/>
    <property type="project" value="UniProtKB"/>
</dbReference>
<dbReference type="GO" id="GO:2000300">
    <property type="term" value="P:regulation of synaptic vesicle exocytosis"/>
    <property type="evidence" value="ECO:0007669"/>
    <property type="project" value="Ensembl"/>
</dbReference>
<dbReference type="GO" id="GO:0060386">
    <property type="term" value="P:synapse assembly involved in innervation"/>
    <property type="evidence" value="ECO:0000318"/>
    <property type="project" value="GO_Central"/>
</dbReference>
<dbReference type="GO" id="GO:0006511">
    <property type="term" value="P:ubiquitin-dependent protein catabolic process"/>
    <property type="evidence" value="ECO:0000314"/>
    <property type="project" value="UniProtKB"/>
</dbReference>
<dbReference type="CDD" id="cd22111">
    <property type="entry name" value="F-box_FBXO45"/>
    <property type="match status" value="1"/>
</dbReference>
<dbReference type="CDD" id="cd12907">
    <property type="entry name" value="SPRY_Fbox"/>
    <property type="match status" value="1"/>
</dbReference>
<dbReference type="FunFam" id="1.20.1280.50:FF:000024">
    <property type="entry name" value="F-box/SPRY domain-containing protein 1"/>
    <property type="match status" value="1"/>
</dbReference>
<dbReference type="FunFam" id="2.60.120.920:FF:000017">
    <property type="entry name" value="F-box/SPRY domain-containing protein 1"/>
    <property type="match status" value="1"/>
</dbReference>
<dbReference type="Gene3D" id="1.20.1280.50">
    <property type="match status" value="1"/>
</dbReference>
<dbReference type="Gene3D" id="2.60.120.920">
    <property type="match status" value="1"/>
</dbReference>
<dbReference type="InterPro" id="IPR001870">
    <property type="entry name" value="B30.2/SPRY"/>
</dbReference>
<dbReference type="InterPro" id="IPR043136">
    <property type="entry name" value="B30.2/SPRY_sf"/>
</dbReference>
<dbReference type="InterPro" id="IPR013320">
    <property type="entry name" value="ConA-like_dom_sf"/>
</dbReference>
<dbReference type="InterPro" id="IPR036047">
    <property type="entry name" value="F-box-like_dom_sf"/>
</dbReference>
<dbReference type="InterPro" id="IPR001810">
    <property type="entry name" value="F-box_dom"/>
</dbReference>
<dbReference type="InterPro" id="IPR050672">
    <property type="entry name" value="FBXO45-Fsn/SPSB_families"/>
</dbReference>
<dbReference type="InterPro" id="IPR003877">
    <property type="entry name" value="SPRY_dom"/>
</dbReference>
<dbReference type="InterPro" id="IPR035784">
    <property type="entry name" value="SPRY_FBXO45"/>
</dbReference>
<dbReference type="PANTHER" id="PTHR12245:SF7">
    <property type="entry name" value="F-BOX_SPRY DOMAIN-CONTAINING PROTEIN 1"/>
    <property type="match status" value="1"/>
</dbReference>
<dbReference type="PANTHER" id="PTHR12245">
    <property type="entry name" value="SPRY DOMAIN CONTAINING SOCS BOX PROTEIN"/>
    <property type="match status" value="1"/>
</dbReference>
<dbReference type="Pfam" id="PF12937">
    <property type="entry name" value="F-box-like"/>
    <property type="match status" value="1"/>
</dbReference>
<dbReference type="Pfam" id="PF00622">
    <property type="entry name" value="SPRY"/>
    <property type="match status" value="1"/>
</dbReference>
<dbReference type="SMART" id="SM00256">
    <property type="entry name" value="FBOX"/>
    <property type="match status" value="1"/>
</dbReference>
<dbReference type="SMART" id="SM00449">
    <property type="entry name" value="SPRY"/>
    <property type="match status" value="1"/>
</dbReference>
<dbReference type="SUPFAM" id="SSF49899">
    <property type="entry name" value="Concanavalin A-like lectins/glucanases"/>
    <property type="match status" value="1"/>
</dbReference>
<dbReference type="SUPFAM" id="SSF81383">
    <property type="entry name" value="F-box domain"/>
    <property type="match status" value="1"/>
</dbReference>
<dbReference type="PROSITE" id="PS50188">
    <property type="entry name" value="B302_SPRY"/>
    <property type="match status" value="1"/>
</dbReference>
<dbReference type="PROSITE" id="PS50181">
    <property type="entry name" value="FBOX"/>
    <property type="match status" value="1"/>
</dbReference>
<protein>
    <recommendedName>
        <fullName>F-box/SPRY domain-containing protein 1</fullName>
    </recommendedName>
    <alternativeName>
        <fullName>F-box only protein 45</fullName>
        <shortName>hFbxo45</shortName>
    </alternativeName>
</protein>
<reference key="1">
    <citation type="journal article" date="2006" name="Nature">
        <title>The DNA sequence, annotation and analysis of human chromosome 3.</title>
        <authorList>
            <person name="Muzny D.M."/>
            <person name="Scherer S.E."/>
            <person name="Kaul R."/>
            <person name="Wang J."/>
            <person name="Yu J."/>
            <person name="Sudbrak R."/>
            <person name="Buhay C.J."/>
            <person name="Chen R."/>
            <person name="Cree A."/>
            <person name="Ding Y."/>
            <person name="Dugan-Rocha S."/>
            <person name="Gill R."/>
            <person name="Gunaratne P."/>
            <person name="Harris R.A."/>
            <person name="Hawes A.C."/>
            <person name="Hernandez J."/>
            <person name="Hodgson A.V."/>
            <person name="Hume J."/>
            <person name="Jackson A."/>
            <person name="Khan Z.M."/>
            <person name="Kovar-Smith C."/>
            <person name="Lewis L.R."/>
            <person name="Lozado R.J."/>
            <person name="Metzker M.L."/>
            <person name="Milosavljevic A."/>
            <person name="Miner G.R."/>
            <person name="Morgan M.B."/>
            <person name="Nazareth L.V."/>
            <person name="Scott G."/>
            <person name="Sodergren E."/>
            <person name="Song X.-Z."/>
            <person name="Steffen D."/>
            <person name="Wei S."/>
            <person name="Wheeler D.A."/>
            <person name="Wright M.W."/>
            <person name="Worley K.C."/>
            <person name="Yuan Y."/>
            <person name="Zhang Z."/>
            <person name="Adams C.Q."/>
            <person name="Ansari-Lari M.A."/>
            <person name="Ayele M."/>
            <person name="Brown M.J."/>
            <person name="Chen G."/>
            <person name="Chen Z."/>
            <person name="Clendenning J."/>
            <person name="Clerc-Blankenburg K.P."/>
            <person name="Chen R."/>
            <person name="Chen Z."/>
            <person name="Davis C."/>
            <person name="Delgado O."/>
            <person name="Dinh H.H."/>
            <person name="Dong W."/>
            <person name="Draper H."/>
            <person name="Ernst S."/>
            <person name="Fu G."/>
            <person name="Gonzalez-Garay M.L."/>
            <person name="Garcia D.K."/>
            <person name="Gillett W."/>
            <person name="Gu J."/>
            <person name="Hao B."/>
            <person name="Haugen E."/>
            <person name="Havlak P."/>
            <person name="He X."/>
            <person name="Hennig S."/>
            <person name="Hu S."/>
            <person name="Huang W."/>
            <person name="Jackson L.R."/>
            <person name="Jacob L.S."/>
            <person name="Kelly S.H."/>
            <person name="Kube M."/>
            <person name="Levy R."/>
            <person name="Li Z."/>
            <person name="Liu B."/>
            <person name="Liu J."/>
            <person name="Liu W."/>
            <person name="Lu J."/>
            <person name="Maheshwari M."/>
            <person name="Nguyen B.-V."/>
            <person name="Okwuonu G.O."/>
            <person name="Palmeiri A."/>
            <person name="Pasternak S."/>
            <person name="Perez L.M."/>
            <person name="Phelps K.A."/>
            <person name="Plopper F.J."/>
            <person name="Qiang B."/>
            <person name="Raymond C."/>
            <person name="Rodriguez R."/>
            <person name="Saenphimmachak C."/>
            <person name="Santibanez J."/>
            <person name="Shen H."/>
            <person name="Shen Y."/>
            <person name="Subramanian S."/>
            <person name="Tabor P.E."/>
            <person name="Verduzco D."/>
            <person name="Waldron L."/>
            <person name="Wang J."/>
            <person name="Wang J."/>
            <person name="Wang Q."/>
            <person name="Williams G.A."/>
            <person name="Wong G.K.-S."/>
            <person name="Yao Z."/>
            <person name="Zhang J."/>
            <person name="Zhang X."/>
            <person name="Zhao G."/>
            <person name="Zhou J."/>
            <person name="Zhou Y."/>
            <person name="Nelson D."/>
            <person name="Lehrach H."/>
            <person name="Reinhardt R."/>
            <person name="Naylor S.L."/>
            <person name="Yang H."/>
            <person name="Olson M."/>
            <person name="Weinstock G."/>
            <person name="Gibbs R.A."/>
        </authorList>
    </citation>
    <scope>NUCLEOTIDE SEQUENCE [LARGE SCALE GENOMIC DNA]</scope>
</reference>
<reference key="2">
    <citation type="submission" date="2005-09" db="EMBL/GenBank/DDBJ databases">
        <authorList>
            <person name="Mural R.J."/>
            <person name="Istrail S."/>
            <person name="Sutton G.G."/>
            <person name="Florea L."/>
            <person name="Halpern A.L."/>
            <person name="Mobarry C.M."/>
            <person name="Lippert R."/>
            <person name="Walenz B."/>
            <person name="Shatkay H."/>
            <person name="Dew I."/>
            <person name="Miller J.R."/>
            <person name="Flanigan M.J."/>
            <person name="Edwards N.J."/>
            <person name="Bolanos R."/>
            <person name="Fasulo D."/>
            <person name="Halldorsson B.V."/>
            <person name="Hannenhalli S."/>
            <person name="Turner R."/>
            <person name="Yooseph S."/>
            <person name="Lu F."/>
            <person name="Nusskern D.R."/>
            <person name="Shue B.C."/>
            <person name="Zheng X.H."/>
            <person name="Zhong F."/>
            <person name="Delcher A.L."/>
            <person name="Huson D.H."/>
            <person name="Kravitz S.A."/>
            <person name="Mouchard L."/>
            <person name="Reinert K."/>
            <person name="Remington K.A."/>
            <person name="Clark A.G."/>
            <person name="Waterman M.S."/>
            <person name="Eichler E.E."/>
            <person name="Adams M.D."/>
            <person name="Hunkapiller M.W."/>
            <person name="Myers E.W."/>
            <person name="Venter J.C."/>
        </authorList>
    </citation>
    <scope>NUCLEOTIDE SEQUENCE [LARGE SCALE GENOMIC DNA]</scope>
</reference>
<reference key="3">
    <citation type="journal article" date="2004" name="Nat. Genet.">
        <title>Complete sequencing and characterization of 21,243 full-length human cDNAs.</title>
        <authorList>
            <person name="Ota T."/>
            <person name="Suzuki Y."/>
            <person name="Nishikawa T."/>
            <person name="Otsuki T."/>
            <person name="Sugiyama T."/>
            <person name="Irie R."/>
            <person name="Wakamatsu A."/>
            <person name="Hayashi K."/>
            <person name="Sato H."/>
            <person name="Nagai K."/>
            <person name="Kimura K."/>
            <person name="Makita H."/>
            <person name="Sekine M."/>
            <person name="Obayashi M."/>
            <person name="Nishi T."/>
            <person name="Shibahara T."/>
            <person name="Tanaka T."/>
            <person name="Ishii S."/>
            <person name="Yamamoto J."/>
            <person name="Saito K."/>
            <person name="Kawai Y."/>
            <person name="Isono Y."/>
            <person name="Nakamura Y."/>
            <person name="Nagahari K."/>
            <person name="Murakami K."/>
            <person name="Yasuda T."/>
            <person name="Iwayanagi T."/>
            <person name="Wagatsuma M."/>
            <person name="Shiratori A."/>
            <person name="Sudo H."/>
            <person name="Hosoiri T."/>
            <person name="Kaku Y."/>
            <person name="Kodaira H."/>
            <person name="Kondo H."/>
            <person name="Sugawara M."/>
            <person name="Takahashi M."/>
            <person name="Kanda K."/>
            <person name="Yokoi T."/>
            <person name="Furuya T."/>
            <person name="Kikkawa E."/>
            <person name="Omura Y."/>
            <person name="Abe K."/>
            <person name="Kamihara K."/>
            <person name="Katsuta N."/>
            <person name="Sato K."/>
            <person name="Tanikawa M."/>
            <person name="Yamazaki M."/>
            <person name="Ninomiya K."/>
            <person name="Ishibashi T."/>
            <person name="Yamashita H."/>
            <person name="Murakawa K."/>
            <person name="Fujimori K."/>
            <person name="Tanai H."/>
            <person name="Kimata M."/>
            <person name="Watanabe M."/>
            <person name="Hiraoka S."/>
            <person name="Chiba Y."/>
            <person name="Ishida S."/>
            <person name="Ono Y."/>
            <person name="Takiguchi S."/>
            <person name="Watanabe S."/>
            <person name="Yosida M."/>
            <person name="Hotuta T."/>
            <person name="Kusano J."/>
            <person name="Kanehori K."/>
            <person name="Takahashi-Fujii A."/>
            <person name="Hara H."/>
            <person name="Tanase T.-O."/>
            <person name="Nomura Y."/>
            <person name="Togiya S."/>
            <person name="Komai F."/>
            <person name="Hara R."/>
            <person name="Takeuchi K."/>
            <person name="Arita M."/>
            <person name="Imose N."/>
            <person name="Musashino K."/>
            <person name="Yuuki H."/>
            <person name="Oshima A."/>
            <person name="Sasaki N."/>
            <person name="Aotsuka S."/>
            <person name="Yoshikawa Y."/>
            <person name="Matsunawa H."/>
            <person name="Ichihara T."/>
            <person name="Shiohata N."/>
            <person name="Sano S."/>
            <person name="Moriya S."/>
            <person name="Momiyama H."/>
            <person name="Satoh N."/>
            <person name="Takami S."/>
            <person name="Terashima Y."/>
            <person name="Suzuki O."/>
            <person name="Nakagawa S."/>
            <person name="Senoh A."/>
            <person name="Mizoguchi H."/>
            <person name="Goto Y."/>
            <person name="Shimizu F."/>
            <person name="Wakebe H."/>
            <person name="Hishigaki H."/>
            <person name="Watanabe T."/>
            <person name="Sugiyama A."/>
            <person name="Takemoto M."/>
            <person name="Kawakami B."/>
            <person name="Yamazaki M."/>
            <person name="Watanabe K."/>
            <person name="Kumagai A."/>
            <person name="Itakura S."/>
            <person name="Fukuzumi Y."/>
            <person name="Fujimori Y."/>
            <person name="Komiyama M."/>
            <person name="Tashiro H."/>
            <person name="Tanigami A."/>
            <person name="Fujiwara T."/>
            <person name="Ono T."/>
            <person name="Yamada K."/>
            <person name="Fujii Y."/>
            <person name="Ozaki K."/>
            <person name="Hirao M."/>
            <person name="Ohmori Y."/>
            <person name="Kawabata A."/>
            <person name="Hikiji T."/>
            <person name="Kobatake N."/>
            <person name="Inagaki H."/>
            <person name="Ikema Y."/>
            <person name="Okamoto S."/>
            <person name="Okitani R."/>
            <person name="Kawakami T."/>
            <person name="Noguchi S."/>
            <person name="Itoh T."/>
            <person name="Shigeta K."/>
            <person name="Senba T."/>
            <person name="Matsumura K."/>
            <person name="Nakajima Y."/>
            <person name="Mizuno T."/>
            <person name="Morinaga M."/>
            <person name="Sasaki M."/>
            <person name="Togashi T."/>
            <person name="Oyama M."/>
            <person name="Hata H."/>
            <person name="Watanabe M."/>
            <person name="Komatsu T."/>
            <person name="Mizushima-Sugano J."/>
            <person name="Satoh T."/>
            <person name="Shirai Y."/>
            <person name="Takahashi Y."/>
            <person name="Nakagawa K."/>
            <person name="Okumura K."/>
            <person name="Nagase T."/>
            <person name="Nomura N."/>
            <person name="Kikuchi H."/>
            <person name="Masuho Y."/>
            <person name="Yamashita R."/>
            <person name="Nakai K."/>
            <person name="Yada T."/>
            <person name="Nakamura Y."/>
            <person name="Ohara O."/>
            <person name="Isogai T."/>
            <person name="Sugano S."/>
        </authorList>
    </citation>
    <scope>NUCLEOTIDE SEQUENCE [LARGE SCALE MRNA] OF 107-286</scope>
    <source>
        <tissue>Hepatoma</tissue>
    </source>
</reference>
<reference key="4">
    <citation type="journal article" date="2004" name="Genes Dev.">
        <title>Systematic analysis and nomenclature of mammalian F-box proteins.</title>
        <authorList>
            <person name="Jin J."/>
            <person name="Cardozo T."/>
            <person name="Lovering R.C."/>
            <person name="Elledge S.J."/>
            <person name="Pagano M."/>
            <person name="Harper J.W."/>
        </authorList>
    </citation>
    <scope>NOMENCLATURE</scope>
    <scope>IDENTIFICATION</scope>
</reference>
<reference key="5">
    <citation type="journal article" date="2009" name="Anal. Chem.">
        <title>Lys-N and trypsin cover complementary parts of the phosphoproteome in a refined SCX-based approach.</title>
        <authorList>
            <person name="Gauci S."/>
            <person name="Helbig A.O."/>
            <person name="Slijper M."/>
            <person name="Krijgsveld J."/>
            <person name="Heck A.J."/>
            <person name="Mohammed S."/>
        </authorList>
    </citation>
    <scope>ACETYLATION [LARGE SCALE ANALYSIS] AT ALA-2</scope>
    <scope>CLEAVAGE OF INITIATOR METHIONINE [LARGE SCALE ANALYSIS]</scope>
    <scope>IDENTIFICATION BY MASS SPECTROMETRY [LARGE SCALE ANALYSIS]</scope>
</reference>
<reference key="6">
    <citation type="journal article" date="2009" name="Oncogene">
        <title>The F-box protein FBXO45 promotes the proteasome-dependent degradation of p73.</title>
        <authorList>
            <person name="Peschiaroli A."/>
            <person name="Scialpi F."/>
            <person name="Bernassola F."/>
            <person name="Pagano M."/>
            <person name="Melino G."/>
        </authorList>
    </citation>
    <scope>FUNCTION</scope>
    <scope>INDUCTION</scope>
</reference>
<reference key="7">
    <citation type="journal article" date="2011" name="BMC Syst. Biol.">
        <title>Initial characterization of the human central proteome.</title>
        <authorList>
            <person name="Burkard T.R."/>
            <person name="Planyavsky M."/>
            <person name="Kaupe I."/>
            <person name="Breitwieser F.P."/>
            <person name="Buerckstuemmer T."/>
            <person name="Bennett K.L."/>
            <person name="Superti-Furga G."/>
            <person name="Colinge J."/>
        </authorList>
    </citation>
    <scope>IDENTIFICATION BY MASS SPECTROMETRY [LARGE SCALE ANALYSIS]</scope>
</reference>
<reference key="8">
    <citation type="journal article" date="2015" name="PLoS ONE">
        <title>Hey bHLH Proteins Interact with a FBXO45 Containing SCF Ubiquitin Ligase Complex and Induce Its Translocation into the Nucleus.</title>
        <authorList>
            <person name="Salat D."/>
            <person name="Winkler A."/>
            <person name="Urlaub H."/>
            <person name="Gessler M."/>
        </authorList>
    </citation>
    <scope>INTERACTION WITH HEY1</scope>
    <scope>SUBCELLULAR LOCATION</scope>
</reference>
<reference key="9">
    <citation type="journal article" date="2018" name="J. Biol. Chem.">
        <title>PAM forms an atypical SCF ubiquitin ligase complex that ubiquitinates and degrades NMNAT2.</title>
        <authorList>
            <person name="Desbois M."/>
            <person name="Crawley O."/>
            <person name="Evans P.R."/>
            <person name="Baker S.T."/>
            <person name="Masuho I."/>
            <person name="Yasuda R."/>
            <person name="Grill B."/>
        </authorList>
    </citation>
    <scope>FUNCTION</scope>
    <scope>INTERACTION WITH MYCBP2 AND SKP1</scope>
</reference>
<reference key="10">
    <citation type="journal article" date="2020" name="Cell Death Differ.">
        <title>FBXO45-MYCBP2 regulates mitotic cell fate by targeting FBXW7 for degradation.</title>
        <authorList>
            <person name="Richter K.T."/>
            <person name="Kschonsak Y.T."/>
            <person name="Vodicska B."/>
            <person name="Hoffmann I."/>
        </authorList>
    </citation>
    <scope>FUNCTION</scope>
</reference>
<reference key="11">
    <citation type="journal article" date="2022" name="J. Biol. Chem.">
        <title>The E3 ligase subunit FBXO45 binds the interferon-lambda receptor and promotes its degradation during influenza virus infection.</title>
        <authorList>
            <person name="Tsai M."/>
            <person name="Osman W."/>
            <person name="Adair J."/>
            <person name="ElMergawy R."/>
            <person name="Chafin L."/>
            <person name="Johns F."/>
            <person name="Farkas D."/>
            <person name="Elhance A."/>
            <person name="Londino J."/>
            <person name="Mallampalli R.K."/>
        </authorList>
    </citation>
    <scope>FUNCTION</scope>
    <scope>INDUCTION BY INFLUENZA INFECTION</scope>
</reference>
<reference key="12">
    <citation type="journal article" date="2020" name="Mol. Cell. Biol.">
        <title>Fbxo45 Binds SPRY Motifs in the Extracellular Domain of N-Cadherin and Regulates Neuron Migration during Brain Development.</title>
        <authorList>
            <person name="Na Y."/>
            <person name="Calvo-Jimenez E."/>
            <person name="Kon E."/>
            <person name="Cao H."/>
            <person name="Jossin Y."/>
            <person name="Cooper J.A."/>
        </authorList>
    </citation>
    <scope>INTERACTION WITH CDH2</scope>
    <scope>SUBCELLULAR LOCATION</scope>
</reference>
<feature type="initiator methionine" description="Removed" evidence="12">
    <location>
        <position position="1"/>
    </location>
</feature>
<feature type="chain" id="PRO_0000285933" description="F-box/SPRY domain-containing protein 1">
    <location>
        <begin position="2"/>
        <end position="286"/>
    </location>
</feature>
<feature type="domain" description="F-box" evidence="3">
    <location>
        <begin position="33"/>
        <end position="82"/>
    </location>
</feature>
<feature type="domain" description="B30.2/SPRY" evidence="4">
    <location>
        <begin position="92"/>
        <end position="284"/>
    </location>
</feature>
<feature type="modified residue" description="N-acetylalanine" evidence="12">
    <location>
        <position position="2"/>
    </location>
</feature>
<proteinExistence type="evidence at protein level"/>
<name>FBSP1_HUMAN</name>
<sequence>MAAPAPGAGAASGGAGCSGGGAGAGAGSGSGAAGAGGRLPSRVLELVFSYLELSELRSCALVCKHWYRCLHGDENSEVWRSLCARSLAEEALRTDILCNLPSYKAKIRAFQHAFSTNDCSRNVYIKKNGFTLHRNPIAQSTDGARTKIGFSEGRHAWEVWWEGPLGTVAVIGIATKRAPMQCQGYVALLGSDDQSWGWNLVDNNLLHNGEVNGSFPQCNNAPKYQIGERIRVILDMEDKTLAFERGYEFLGVAFRGLPKVCLYPAVSAVYGNTEVTLVYLGKPLDG</sequence>
<accession>P0C2W1</accession>
<accession>A6NF90</accession>
<accession>D3DXB5</accession>
<evidence type="ECO:0000250" key="1">
    <source>
        <dbReference type="UniProtKB" id="P0CH38"/>
    </source>
</evidence>
<evidence type="ECO:0000250" key="2">
    <source>
        <dbReference type="UniProtKB" id="Q8K3B1"/>
    </source>
</evidence>
<evidence type="ECO:0000255" key="3">
    <source>
        <dbReference type="PROSITE-ProRule" id="PRU00080"/>
    </source>
</evidence>
<evidence type="ECO:0000255" key="4">
    <source>
        <dbReference type="PROSITE-ProRule" id="PRU00548"/>
    </source>
</evidence>
<evidence type="ECO:0000269" key="5">
    <source>
    </source>
</evidence>
<evidence type="ECO:0000269" key="6">
    <source>
    </source>
</evidence>
<evidence type="ECO:0000269" key="7">
    <source>
    </source>
</evidence>
<evidence type="ECO:0000269" key="8">
    <source>
    </source>
</evidence>
<evidence type="ECO:0000269" key="9">
    <source>
    </source>
</evidence>
<evidence type="ECO:0000269" key="10">
    <source>
    </source>
</evidence>
<evidence type="ECO:0000305" key="11"/>
<evidence type="ECO:0007744" key="12">
    <source>
    </source>
</evidence>